<accession>A6NNS2</accession>
<accession>B7ZW74</accession>
<accession>B9EJH3</accession>
<comment type="function">
    <text evidence="1">NADH-dependent oxidoreductase which catalyzes the oxidation of all-trans-retinol to all-trans-retinal. Plays a role in the regulation of cardiac and skeletal muscle metabolic functions. Maintains Ca(2+) intracellular homeostasis by repressing Ca(2+) release from the sarcoplasmic reticulum (SR) in myotubes, possibly through local alternations in NAD/NADH or retinol/retinal. Also plays a role in Ca(2+) homeostasis by controlling Ca(2+) overload in the cytosol and the SR in myotubes. Involved in glucose uptake into skeletal muscles and muscle performance by activating PI3K and mTORC2-mediated AKT1 phosphorylation signaling pathways, possibly through the action of its downstream catalytic product all-trans-retinoic acid.</text>
</comment>
<comment type="catalytic activity">
    <reaction evidence="1">
        <text>all-trans-retinol + NAD(+) = all-trans-retinal + NADH + H(+)</text>
        <dbReference type="Rhea" id="RHEA:21284"/>
        <dbReference type="ChEBI" id="CHEBI:15378"/>
        <dbReference type="ChEBI" id="CHEBI:17336"/>
        <dbReference type="ChEBI" id="CHEBI:17898"/>
        <dbReference type="ChEBI" id="CHEBI:57540"/>
        <dbReference type="ChEBI" id="CHEBI:57945"/>
        <dbReference type="EC" id="1.1.1.105"/>
    </reaction>
    <physiologicalReaction direction="left-to-right" evidence="1">
        <dbReference type="Rhea" id="RHEA:21285"/>
    </physiologicalReaction>
</comment>
<comment type="subcellular location">
    <subcellularLocation>
        <location evidence="1">Sarcoplasmic reticulum membrane</location>
    </subcellularLocation>
    <text evidence="1">The N-terminus region encompasses a short hydrophobic sequence bound to the sarcoplasmic reticulum membrane, whereas the C-terminus catalytic domain faces the myoplasm. In skeletal muscle, enriched in the longitudinal sarcoplasmic reticulum.</text>
</comment>
<comment type="alternative products">
    <event type="alternative splicing"/>
    <isoform>
        <id>A6NNS2-1</id>
        <name>1</name>
        <sequence type="displayed"/>
    </isoform>
    <isoform>
        <id>A6NNS2-2</id>
        <name>2</name>
        <sequence type="described" ref="VSP_054852"/>
    </isoform>
</comment>
<comment type="domain">
    <text evidence="1">The N-terminus region encompasses a short hydrophobic sequence bound to the sarcoplasmic reticulum membrane, whereas the C-terminus catalytic domain faces the myoplasm.</text>
</comment>
<comment type="similarity">
    <text evidence="7">Belongs to the short-chain dehydrogenases/reductases (SDR) family.</text>
</comment>
<comment type="sequence caution" evidence="7">
    <conflict type="erroneous initiation">
        <sequence resource="EMBL-CDS" id="AAI47025"/>
    </conflict>
    <text>Truncated N-terminus.</text>
</comment>
<comment type="sequence caution" evidence="7">
    <conflict type="erroneous initiation">
        <sequence resource="EMBL-CDS" id="AAI47026"/>
    </conflict>
    <text>Truncated N-terminus.</text>
</comment>
<evidence type="ECO:0000250" key="1">
    <source>
        <dbReference type="UniProtKB" id="Q8CHS7"/>
    </source>
</evidence>
<evidence type="ECO:0000250" key="2">
    <source>
        <dbReference type="UniProtKB" id="Q99714"/>
    </source>
</evidence>
<evidence type="ECO:0000255" key="3"/>
<evidence type="ECO:0000255" key="4">
    <source>
        <dbReference type="PROSITE-ProRule" id="PRU10001"/>
    </source>
</evidence>
<evidence type="ECO:0000303" key="5">
    <source>
    </source>
</evidence>
<evidence type="ECO:0000303" key="6">
    <source>
    </source>
</evidence>
<evidence type="ECO:0000305" key="7"/>
<evidence type="ECO:0000312" key="8">
    <source>
        <dbReference type="HGNC" id="HGNC:32423"/>
    </source>
</evidence>
<sequence>MGVMAMLMLPLLLLGISGLLFIYQEVSRLWSKSAVQNKVVVITDAISGLGKECARVFHTGGARLVLCGKNWERLENLYDALISVADPSKQTFTPKLVLLDLSDISCVPDVAKEVLDCYGCVDILINNASVKVKGPAHKISLELDKKIMDANYFGPITLTKALLPNMISRRTGQIVLVNNIQGKFGIPFRTTYAASKHAALGFFDCLRAEVEEYDVVISTVSPTFIRSYHVYPEQGNWEASIWKFFFRKLTYGVHPVEVAEEVMRTVRRKKQEVFMANPIPKAAVYVRTFFPEFFFAVVACGVKEKLNVPEEG</sequence>
<keyword id="KW-0025">Alternative splicing</keyword>
<keyword id="KW-0472">Membrane</keyword>
<keyword id="KW-0520">NAD</keyword>
<keyword id="KW-0521">NADP</keyword>
<keyword id="KW-0560">Oxidoreductase</keyword>
<keyword id="KW-1267">Proteomics identification</keyword>
<keyword id="KW-1185">Reference proteome</keyword>
<keyword id="KW-0703">Sarcoplasmic reticulum</keyword>
<keyword id="KW-0732">Signal</keyword>
<reference key="1">
    <citation type="journal article" date="2006" name="Nature">
        <title>DNA sequence of human chromosome 17 and analysis of rearrangement in the human lineage.</title>
        <authorList>
            <person name="Zody M.C."/>
            <person name="Garber M."/>
            <person name="Adams D.J."/>
            <person name="Sharpe T."/>
            <person name="Harrow J."/>
            <person name="Lupski J.R."/>
            <person name="Nicholson C."/>
            <person name="Searle S.M."/>
            <person name="Wilming L."/>
            <person name="Young S.K."/>
            <person name="Abouelleil A."/>
            <person name="Allen N.R."/>
            <person name="Bi W."/>
            <person name="Bloom T."/>
            <person name="Borowsky M.L."/>
            <person name="Bugalter B.E."/>
            <person name="Butler J."/>
            <person name="Chang J.L."/>
            <person name="Chen C.-K."/>
            <person name="Cook A."/>
            <person name="Corum B."/>
            <person name="Cuomo C.A."/>
            <person name="de Jong P.J."/>
            <person name="DeCaprio D."/>
            <person name="Dewar K."/>
            <person name="FitzGerald M."/>
            <person name="Gilbert J."/>
            <person name="Gibson R."/>
            <person name="Gnerre S."/>
            <person name="Goldstein S."/>
            <person name="Grafham D.V."/>
            <person name="Grocock R."/>
            <person name="Hafez N."/>
            <person name="Hagopian D.S."/>
            <person name="Hart E."/>
            <person name="Norman C.H."/>
            <person name="Humphray S."/>
            <person name="Jaffe D.B."/>
            <person name="Jones M."/>
            <person name="Kamal M."/>
            <person name="Khodiyar V.K."/>
            <person name="LaButti K."/>
            <person name="Laird G."/>
            <person name="Lehoczky J."/>
            <person name="Liu X."/>
            <person name="Lokyitsang T."/>
            <person name="Loveland J."/>
            <person name="Lui A."/>
            <person name="Macdonald P."/>
            <person name="Major J.E."/>
            <person name="Matthews L."/>
            <person name="Mauceli E."/>
            <person name="McCarroll S.A."/>
            <person name="Mihalev A.H."/>
            <person name="Mudge J."/>
            <person name="Nguyen C."/>
            <person name="Nicol R."/>
            <person name="O'Leary S.B."/>
            <person name="Osoegawa K."/>
            <person name="Schwartz D.C."/>
            <person name="Shaw-Smith C."/>
            <person name="Stankiewicz P."/>
            <person name="Steward C."/>
            <person name="Swarbreck D."/>
            <person name="Venkataraman V."/>
            <person name="Whittaker C.A."/>
            <person name="Yang X."/>
            <person name="Zimmer A.R."/>
            <person name="Bradley A."/>
            <person name="Hubbard T."/>
            <person name="Birren B.W."/>
            <person name="Rogers J."/>
            <person name="Lander E.S."/>
            <person name="Nusbaum C."/>
        </authorList>
    </citation>
    <scope>NUCLEOTIDE SEQUENCE [LARGE SCALE GENOMIC DNA]</scope>
</reference>
<reference key="2">
    <citation type="journal article" date="2004" name="Genome Res.">
        <title>The status, quality, and expansion of the NIH full-length cDNA project: the Mammalian Gene Collection (MGC).</title>
        <authorList>
            <consortium name="The MGC Project Team"/>
        </authorList>
    </citation>
    <scope>NUCLEOTIDE SEQUENCE [LARGE SCALE MRNA] (ISOFORMS 1 AND 2)</scope>
</reference>
<reference key="3">
    <citation type="journal article" date="2009" name="Chem. Biol. Interact.">
        <title>The SDR (short-chain dehydrogenase/reductase and related enzymes) nomenclature initiative.</title>
        <authorList>
            <person name="Persson B."/>
            <person name="Kallberg Y."/>
            <person name="Bray J.E."/>
            <person name="Bruford E."/>
            <person name="Dellaporta S.L."/>
            <person name="Favia A.D."/>
            <person name="Duarte R.G."/>
            <person name="Joernvall H."/>
            <person name="Kavanagh K.L."/>
            <person name="Kedishvili N."/>
            <person name="Kisiela M."/>
            <person name="Maser E."/>
            <person name="Mindnich R."/>
            <person name="Orchard S."/>
            <person name="Penning T.M."/>
            <person name="Thornton J.M."/>
            <person name="Adamski J."/>
            <person name="Oppermann U."/>
        </authorList>
    </citation>
    <scope>GENE FAMILY</scope>
    <scope>NOMENCLATURE</scope>
</reference>
<feature type="signal peptide" evidence="3">
    <location>
        <begin position="1"/>
        <end position="18"/>
    </location>
</feature>
<feature type="chain" id="PRO_0000333755" description="Dehydrogenase/reductase SDR family member 7C">
    <location>
        <begin position="19"/>
        <end position="312"/>
    </location>
</feature>
<feature type="active site" description="Proton acceptor" evidence="4">
    <location>
        <position position="192"/>
    </location>
</feature>
<feature type="binding site" evidence="2">
    <location>
        <position position="47"/>
    </location>
    <ligand>
        <name>NAD(+)</name>
        <dbReference type="ChEBI" id="CHEBI:57540"/>
    </ligand>
</feature>
<feature type="binding site" evidence="2">
    <location>
        <position position="49"/>
    </location>
    <ligand>
        <name>NAD(+)</name>
        <dbReference type="ChEBI" id="CHEBI:57540"/>
    </ligand>
</feature>
<feature type="binding site" evidence="2">
    <location>
        <position position="192"/>
    </location>
    <ligand>
        <name>NAD(+)</name>
        <dbReference type="ChEBI" id="CHEBI:57540"/>
    </ligand>
</feature>
<feature type="binding site" evidence="2">
    <location>
        <position position="196"/>
    </location>
    <ligand>
        <name>NAD(+)</name>
        <dbReference type="ChEBI" id="CHEBI:57540"/>
    </ligand>
</feature>
<feature type="binding site" evidence="2">
    <location>
        <position position="227"/>
    </location>
    <ligand>
        <name>NAD(+)</name>
        <dbReference type="ChEBI" id="CHEBI:57540"/>
    </ligand>
</feature>
<feature type="splice variant" id="VSP_054852" description="In isoform 2." evidence="5">
    <location>
        <position position="90"/>
    </location>
</feature>
<feature type="sequence variant" id="VAR_043150" description="In dbSNP:rs2280490.">
    <original>S</original>
    <variation>L</variation>
    <location>
        <position position="227"/>
    </location>
</feature>
<name>DRS7C_HUMAN</name>
<proteinExistence type="evidence at protein level"/>
<organism>
    <name type="scientific">Homo sapiens</name>
    <name type="common">Human</name>
    <dbReference type="NCBI Taxonomy" id="9606"/>
    <lineage>
        <taxon>Eukaryota</taxon>
        <taxon>Metazoa</taxon>
        <taxon>Chordata</taxon>
        <taxon>Craniata</taxon>
        <taxon>Vertebrata</taxon>
        <taxon>Euteleostomi</taxon>
        <taxon>Mammalia</taxon>
        <taxon>Eutheria</taxon>
        <taxon>Euarchontoglires</taxon>
        <taxon>Primates</taxon>
        <taxon>Haplorrhini</taxon>
        <taxon>Catarrhini</taxon>
        <taxon>Hominidae</taxon>
        <taxon>Homo</taxon>
    </lineage>
</organism>
<dbReference type="EC" id="1.1.1.105" evidence="1"/>
<dbReference type="EMBL" id="AC027045">
    <property type="status" value="NOT_ANNOTATED_CDS"/>
    <property type="molecule type" value="Genomic_DNA"/>
</dbReference>
<dbReference type="EMBL" id="BC147024">
    <property type="protein sequence ID" value="AAI47025.1"/>
    <property type="status" value="ALT_INIT"/>
    <property type="molecule type" value="mRNA"/>
</dbReference>
<dbReference type="EMBL" id="BC147025">
    <property type="protein sequence ID" value="AAI47026.1"/>
    <property type="status" value="ALT_INIT"/>
    <property type="molecule type" value="mRNA"/>
</dbReference>
<dbReference type="EMBL" id="BC171909">
    <property type="protein sequence ID" value="AAI71909.1"/>
    <property type="molecule type" value="mRNA"/>
</dbReference>
<dbReference type="CCDS" id="CCDS56020.1">
    <molecule id="A6NNS2-1"/>
</dbReference>
<dbReference type="CCDS" id="CCDS58517.1">
    <molecule id="A6NNS2-2"/>
</dbReference>
<dbReference type="RefSeq" id="NP_001099041.1">
    <molecule id="A6NNS2-2"/>
    <property type="nucleotide sequence ID" value="NM_001105571.3"/>
</dbReference>
<dbReference type="RefSeq" id="NP_001207422.1">
    <molecule id="A6NNS2-1"/>
    <property type="nucleotide sequence ID" value="NM_001220493.2"/>
</dbReference>
<dbReference type="SMR" id="A6NNS2"/>
<dbReference type="BioGRID" id="128363">
    <property type="interactions" value="1"/>
</dbReference>
<dbReference type="FunCoup" id="A6NNS2">
    <property type="interactions" value="28"/>
</dbReference>
<dbReference type="STRING" id="9606.ENSP00000327975"/>
<dbReference type="iPTMnet" id="A6NNS2"/>
<dbReference type="PhosphoSitePlus" id="A6NNS2"/>
<dbReference type="BioMuta" id="DHRS7C"/>
<dbReference type="MassIVE" id="A6NNS2"/>
<dbReference type="PaxDb" id="9606-ENSP00000327975"/>
<dbReference type="PeptideAtlas" id="A6NNS2"/>
<dbReference type="ProteomicsDB" id="1633">
    <molecule id="A6NNS2-1"/>
</dbReference>
<dbReference type="Antibodypedia" id="6297">
    <property type="antibodies" value="98 antibodies from 15 providers"/>
</dbReference>
<dbReference type="DNASU" id="201140"/>
<dbReference type="Ensembl" id="ENST00000330255.9">
    <molecule id="A6NNS2-1"/>
    <property type="protein sequence ID" value="ENSP00000327975.4"/>
    <property type="gene ID" value="ENSG00000184544.12"/>
</dbReference>
<dbReference type="Ensembl" id="ENST00000571134.2">
    <molecule id="A6NNS2-2"/>
    <property type="protein sequence ID" value="ENSP00000459579.1"/>
    <property type="gene ID" value="ENSG00000184544.12"/>
</dbReference>
<dbReference type="GeneID" id="201140"/>
<dbReference type="KEGG" id="hsa:201140"/>
<dbReference type="MANE-Select" id="ENST00000571134.2">
    <molecule id="A6NNS2-2"/>
    <property type="protein sequence ID" value="ENSP00000459579.1"/>
    <property type="RefSeq nucleotide sequence ID" value="NM_001105571.3"/>
    <property type="RefSeq protein sequence ID" value="NP_001099041.1"/>
</dbReference>
<dbReference type="UCSC" id="uc010cof.4">
    <molecule id="A6NNS2-1"/>
    <property type="organism name" value="human"/>
</dbReference>
<dbReference type="AGR" id="HGNC:32423"/>
<dbReference type="CTD" id="201140"/>
<dbReference type="DisGeNET" id="201140"/>
<dbReference type="GeneCards" id="DHRS7C"/>
<dbReference type="HGNC" id="HGNC:32423">
    <property type="gene designation" value="DHRS7C"/>
</dbReference>
<dbReference type="HPA" id="ENSG00000184544">
    <property type="expression patterns" value="Group enriched (heart muscle, skeletal muscle, tongue)"/>
</dbReference>
<dbReference type="MIM" id="616161">
    <property type="type" value="gene"/>
</dbReference>
<dbReference type="neXtProt" id="NX_A6NNS2"/>
<dbReference type="OpenTargets" id="ENSG00000184544"/>
<dbReference type="VEuPathDB" id="HostDB:ENSG00000184544"/>
<dbReference type="eggNOG" id="KOG1205">
    <property type="taxonomic scope" value="Eukaryota"/>
</dbReference>
<dbReference type="GeneTree" id="ENSGT00940000157100"/>
<dbReference type="HOGENOM" id="CLU_010194_2_1_1"/>
<dbReference type="InParanoid" id="A6NNS2"/>
<dbReference type="OMA" id="NIMDVNY"/>
<dbReference type="OrthoDB" id="5307821at2759"/>
<dbReference type="PAN-GO" id="A6NNS2">
    <property type="GO annotations" value="2 GO annotations based on evolutionary models"/>
</dbReference>
<dbReference type="PhylomeDB" id="A6NNS2"/>
<dbReference type="TreeFam" id="TF313474"/>
<dbReference type="PathwayCommons" id="A6NNS2"/>
<dbReference type="BioGRID-ORCS" id="201140">
    <property type="hits" value="11 hits in 1133 CRISPR screens"/>
</dbReference>
<dbReference type="GenomeRNAi" id="201140"/>
<dbReference type="Pharos" id="A6NNS2">
    <property type="development level" value="Tdark"/>
</dbReference>
<dbReference type="PRO" id="PR:A6NNS2"/>
<dbReference type="Proteomes" id="UP000005640">
    <property type="component" value="Chromosome 17"/>
</dbReference>
<dbReference type="RNAct" id="A6NNS2">
    <property type="molecule type" value="protein"/>
</dbReference>
<dbReference type="Bgee" id="ENSG00000184544">
    <property type="expression patterns" value="Expressed in vastus lateralis and 101 other cell types or tissues"/>
</dbReference>
<dbReference type="ExpressionAtlas" id="A6NNS2">
    <property type="expression patterns" value="baseline and differential"/>
</dbReference>
<dbReference type="GO" id="GO:0014801">
    <property type="term" value="C:longitudinal sarcoplasmic reticulum"/>
    <property type="evidence" value="ECO:0000250"/>
    <property type="project" value="UniProtKB"/>
</dbReference>
<dbReference type="GO" id="GO:0033017">
    <property type="term" value="C:sarcoplasmic reticulum membrane"/>
    <property type="evidence" value="ECO:0000250"/>
    <property type="project" value="UniProtKB"/>
</dbReference>
<dbReference type="GO" id="GO:0004745">
    <property type="term" value="F:all-trans-retinol dehydrogenase (NAD+) activity"/>
    <property type="evidence" value="ECO:0000250"/>
    <property type="project" value="UniProtKB"/>
</dbReference>
<dbReference type="GO" id="GO:0016616">
    <property type="term" value="F:oxidoreductase activity, acting on the CH-OH group of donors, NAD or NADP as acceptor"/>
    <property type="evidence" value="ECO:0000318"/>
    <property type="project" value="GO_Central"/>
</dbReference>
<dbReference type="GO" id="GO:0046323">
    <property type="term" value="P:D-glucose import"/>
    <property type="evidence" value="ECO:0000250"/>
    <property type="project" value="UniProtKB"/>
</dbReference>
<dbReference type="GO" id="GO:0006874">
    <property type="term" value="P:intracellular calcium ion homeostasis"/>
    <property type="evidence" value="ECO:0000250"/>
    <property type="project" value="UniProtKB"/>
</dbReference>
<dbReference type="GO" id="GO:0010880">
    <property type="term" value="P:regulation of release of sequestered calcium ion into cytosol by sarcoplasmic reticulum"/>
    <property type="evidence" value="ECO:0000250"/>
    <property type="project" value="UniProtKB"/>
</dbReference>
<dbReference type="CDD" id="cd05332">
    <property type="entry name" value="11beta-HSD1_like_SDR_c"/>
    <property type="match status" value="1"/>
</dbReference>
<dbReference type="FunFam" id="3.40.50.720:FF:000122">
    <property type="entry name" value="Dehydrogenase/reductase SDR family member 7B"/>
    <property type="match status" value="1"/>
</dbReference>
<dbReference type="Gene3D" id="3.40.50.720">
    <property type="entry name" value="NAD(P)-binding Rossmann-like Domain"/>
    <property type="match status" value="1"/>
</dbReference>
<dbReference type="InterPro" id="IPR036291">
    <property type="entry name" value="NAD(P)-bd_dom_sf"/>
</dbReference>
<dbReference type="InterPro" id="IPR020904">
    <property type="entry name" value="Sc_DH/Rdtase_CS"/>
</dbReference>
<dbReference type="InterPro" id="IPR002347">
    <property type="entry name" value="SDR_fam"/>
</dbReference>
<dbReference type="InterPro" id="IPR052148">
    <property type="entry name" value="SDR_family_member_7C"/>
</dbReference>
<dbReference type="PANTHER" id="PTHR44668">
    <property type="match status" value="1"/>
</dbReference>
<dbReference type="PANTHER" id="PTHR44668:SF2">
    <property type="entry name" value="DEHYDROGENASE_REDUCTASE SDR FAMILY MEMBER 7C"/>
    <property type="match status" value="1"/>
</dbReference>
<dbReference type="Pfam" id="PF00106">
    <property type="entry name" value="adh_short"/>
    <property type="match status" value="1"/>
</dbReference>
<dbReference type="PRINTS" id="PR00081">
    <property type="entry name" value="GDHRDH"/>
</dbReference>
<dbReference type="PRINTS" id="PR00080">
    <property type="entry name" value="SDRFAMILY"/>
</dbReference>
<dbReference type="SUPFAM" id="SSF51735">
    <property type="entry name" value="NAD(P)-binding Rossmann-fold domains"/>
    <property type="match status" value="1"/>
</dbReference>
<dbReference type="PROSITE" id="PS00061">
    <property type="entry name" value="ADH_SHORT"/>
    <property type="match status" value="1"/>
</dbReference>
<gene>
    <name evidence="8" type="primary">DHRS7C</name>
    <name evidence="6" type="synonym">SDR32C2</name>
</gene>
<protein>
    <recommendedName>
        <fullName evidence="1">Dehydrogenase/reductase SDR family member 7C</fullName>
        <ecNumber evidence="1">1.1.1.105</ecNumber>
    </recommendedName>
    <alternativeName>
        <fullName evidence="1">Sarcoplasmic reticulum protein of 35 kDa</fullName>
        <shortName evidence="1">Protein SRP-35</shortName>
    </alternativeName>
    <alternativeName>
        <fullName evidence="6">Short-chain dehydrogenase/reductase family 32C member 2</fullName>
        <shortName evidence="6">Protein SDR32C2</shortName>
    </alternativeName>
</protein>